<proteinExistence type="inferred from homology"/>
<accession>Q3IJ24</accession>
<gene>
    <name evidence="1" type="primary">fadA</name>
    <name type="ordered locus">PSHAa0010</name>
</gene>
<name>FADA_PSET1</name>
<reference key="1">
    <citation type="journal article" date="2005" name="Genome Res.">
        <title>Coping with cold: the genome of the versatile marine Antarctica bacterium Pseudoalteromonas haloplanktis TAC125.</title>
        <authorList>
            <person name="Medigue C."/>
            <person name="Krin E."/>
            <person name="Pascal G."/>
            <person name="Barbe V."/>
            <person name="Bernsel A."/>
            <person name="Bertin P.N."/>
            <person name="Cheung F."/>
            <person name="Cruveiller S."/>
            <person name="D'Amico S."/>
            <person name="Duilio A."/>
            <person name="Fang G."/>
            <person name="Feller G."/>
            <person name="Ho C."/>
            <person name="Mangenot S."/>
            <person name="Marino G."/>
            <person name="Nilsson J."/>
            <person name="Parrilli E."/>
            <person name="Rocha E.P.C."/>
            <person name="Rouy Z."/>
            <person name="Sekowska A."/>
            <person name="Tutino M.L."/>
            <person name="Vallenet D."/>
            <person name="von Heijne G."/>
            <person name="Danchin A."/>
        </authorList>
    </citation>
    <scope>NUCLEOTIDE SEQUENCE [LARGE SCALE GENOMIC DNA]</scope>
    <source>
        <strain>TAC 125</strain>
    </source>
</reference>
<evidence type="ECO:0000255" key="1">
    <source>
        <dbReference type="HAMAP-Rule" id="MF_01620"/>
    </source>
</evidence>
<comment type="function">
    <text evidence="1">Catalyzes the final step of fatty acid oxidation in which acetyl-CoA is released and the CoA ester of a fatty acid two carbons shorter is formed.</text>
</comment>
<comment type="catalytic activity">
    <reaction evidence="1">
        <text>an acyl-CoA + acetyl-CoA = a 3-oxoacyl-CoA + CoA</text>
        <dbReference type="Rhea" id="RHEA:21564"/>
        <dbReference type="ChEBI" id="CHEBI:57287"/>
        <dbReference type="ChEBI" id="CHEBI:57288"/>
        <dbReference type="ChEBI" id="CHEBI:58342"/>
        <dbReference type="ChEBI" id="CHEBI:90726"/>
        <dbReference type="EC" id="2.3.1.16"/>
    </reaction>
</comment>
<comment type="pathway">
    <text evidence="1">Lipid metabolism; fatty acid beta-oxidation.</text>
</comment>
<comment type="subunit">
    <text evidence="1">Heterotetramer of two alpha chains (FadB) and two beta chains (FadA).</text>
</comment>
<comment type="subcellular location">
    <subcellularLocation>
        <location evidence="1">Cytoplasm</location>
    </subcellularLocation>
</comment>
<comment type="similarity">
    <text evidence="1">Belongs to the thiolase-like superfamily. Thiolase family.</text>
</comment>
<protein>
    <recommendedName>
        <fullName evidence="1">3-ketoacyl-CoA thiolase</fullName>
        <ecNumber evidence="1">2.3.1.16</ecNumber>
    </recommendedName>
    <alternativeName>
        <fullName evidence="1">Acetyl-CoA acyltransferase</fullName>
    </alternativeName>
    <alternativeName>
        <fullName evidence="1">Beta-ketothiolase</fullName>
    </alternativeName>
    <alternativeName>
        <fullName evidence="1">Fatty acid oxidation complex subunit beta</fullName>
    </alternativeName>
</protein>
<keyword id="KW-0012">Acyltransferase</keyword>
<keyword id="KW-0963">Cytoplasm</keyword>
<keyword id="KW-0276">Fatty acid metabolism</keyword>
<keyword id="KW-0442">Lipid degradation</keyword>
<keyword id="KW-0443">Lipid metabolism</keyword>
<keyword id="KW-1185">Reference proteome</keyword>
<keyword id="KW-0808">Transferase</keyword>
<feature type="chain" id="PRO_0000292894" description="3-ketoacyl-CoA thiolase">
    <location>
        <begin position="1"/>
        <end position="389"/>
    </location>
</feature>
<feature type="active site" description="Acyl-thioester intermediate" evidence="1">
    <location>
        <position position="91"/>
    </location>
</feature>
<feature type="active site" description="Proton acceptor" evidence="1">
    <location>
        <position position="343"/>
    </location>
</feature>
<feature type="active site" description="Proton acceptor" evidence="1">
    <location>
        <position position="373"/>
    </location>
</feature>
<sequence>MNNPVIVDCIRTPMGRSKGGVFKNKRAEDLSAHLMKGLLDRNPAVDPASIDDIYWGCVQQTLEQGFNVARNAALLAGIPHSVPAVTVNRLCGSSMQALHDAARAIMTGAGDTYLIGGVEHMGHVPMTHGNDFHPGLATSIAQAAGSMGLTAEYLATLHGISREQQDEFAYRSHQRAQAATVEGRFRREILAMEGHAADGSLILVEDDEVIRPETTVEGLSKLRPVFNPASGTVTAGTSSALSDGASAMLVMSEAKAKELGLPIRARIKAMAVAGCDPSIMGYGPVPASKKALAQAGITIDDLGVVELNEAFAAQSLPVMKDLGLMDVVDEKVNLNGGAIALGHPLGCSGSRISTSLIHLMEDKNVRYGLATMCIGLGQGIATVFERVQD</sequence>
<dbReference type="EC" id="2.3.1.16" evidence="1"/>
<dbReference type="EMBL" id="CR954246">
    <property type="protein sequence ID" value="CAI85124.1"/>
    <property type="molecule type" value="Genomic_DNA"/>
</dbReference>
<dbReference type="SMR" id="Q3IJ24"/>
<dbReference type="STRING" id="326442.PSHAa0010"/>
<dbReference type="KEGG" id="pha:PSHAa0010"/>
<dbReference type="eggNOG" id="COG0183">
    <property type="taxonomic scope" value="Bacteria"/>
</dbReference>
<dbReference type="HOGENOM" id="CLU_031026_2_3_6"/>
<dbReference type="BioCyc" id="PHAL326442:PSHA_RS00050-MONOMER"/>
<dbReference type="UniPathway" id="UPA00659"/>
<dbReference type="Proteomes" id="UP000006843">
    <property type="component" value="Chromosome I"/>
</dbReference>
<dbReference type="GO" id="GO:0005737">
    <property type="term" value="C:cytoplasm"/>
    <property type="evidence" value="ECO:0007669"/>
    <property type="project" value="UniProtKB-SubCell"/>
</dbReference>
<dbReference type="GO" id="GO:0003988">
    <property type="term" value="F:acetyl-CoA C-acyltransferase activity"/>
    <property type="evidence" value="ECO:0007669"/>
    <property type="project" value="UniProtKB-UniRule"/>
</dbReference>
<dbReference type="GO" id="GO:0006635">
    <property type="term" value="P:fatty acid beta-oxidation"/>
    <property type="evidence" value="ECO:0007669"/>
    <property type="project" value="UniProtKB-UniRule"/>
</dbReference>
<dbReference type="GO" id="GO:0010124">
    <property type="term" value="P:phenylacetate catabolic process"/>
    <property type="evidence" value="ECO:0007669"/>
    <property type="project" value="TreeGrafter"/>
</dbReference>
<dbReference type="CDD" id="cd00751">
    <property type="entry name" value="thiolase"/>
    <property type="match status" value="1"/>
</dbReference>
<dbReference type="FunFam" id="3.40.47.10:FF:000010">
    <property type="entry name" value="Acetyl-CoA acetyltransferase (Thiolase)"/>
    <property type="match status" value="1"/>
</dbReference>
<dbReference type="Gene3D" id="3.40.47.10">
    <property type="match status" value="2"/>
</dbReference>
<dbReference type="HAMAP" id="MF_01620">
    <property type="entry name" value="FadA"/>
    <property type="match status" value="1"/>
</dbReference>
<dbReference type="InterPro" id="IPR012805">
    <property type="entry name" value="FadA"/>
</dbReference>
<dbReference type="InterPro" id="IPR002155">
    <property type="entry name" value="Thiolase"/>
</dbReference>
<dbReference type="InterPro" id="IPR016039">
    <property type="entry name" value="Thiolase-like"/>
</dbReference>
<dbReference type="InterPro" id="IPR050215">
    <property type="entry name" value="Thiolase-like_sf_Thiolase"/>
</dbReference>
<dbReference type="InterPro" id="IPR020615">
    <property type="entry name" value="Thiolase_acyl_enz_int_AS"/>
</dbReference>
<dbReference type="InterPro" id="IPR020610">
    <property type="entry name" value="Thiolase_AS"/>
</dbReference>
<dbReference type="InterPro" id="IPR020617">
    <property type="entry name" value="Thiolase_C"/>
</dbReference>
<dbReference type="InterPro" id="IPR020613">
    <property type="entry name" value="Thiolase_CS"/>
</dbReference>
<dbReference type="InterPro" id="IPR020616">
    <property type="entry name" value="Thiolase_N"/>
</dbReference>
<dbReference type="NCBIfam" id="TIGR01930">
    <property type="entry name" value="AcCoA-C-Actrans"/>
    <property type="match status" value="1"/>
</dbReference>
<dbReference type="NCBIfam" id="TIGR02445">
    <property type="entry name" value="fadA"/>
    <property type="match status" value="1"/>
</dbReference>
<dbReference type="NCBIfam" id="NF006510">
    <property type="entry name" value="PRK08947.1"/>
    <property type="match status" value="1"/>
</dbReference>
<dbReference type="PANTHER" id="PTHR43853:SF11">
    <property type="entry name" value="3-KETOACYL-COA THIOLASE FADA"/>
    <property type="match status" value="1"/>
</dbReference>
<dbReference type="PANTHER" id="PTHR43853">
    <property type="entry name" value="3-KETOACYL-COA THIOLASE, PEROXISOMAL"/>
    <property type="match status" value="1"/>
</dbReference>
<dbReference type="Pfam" id="PF02803">
    <property type="entry name" value="Thiolase_C"/>
    <property type="match status" value="1"/>
</dbReference>
<dbReference type="Pfam" id="PF00108">
    <property type="entry name" value="Thiolase_N"/>
    <property type="match status" value="1"/>
</dbReference>
<dbReference type="PIRSF" id="PIRSF000429">
    <property type="entry name" value="Ac-CoA_Ac_transf"/>
    <property type="match status" value="1"/>
</dbReference>
<dbReference type="SUPFAM" id="SSF53901">
    <property type="entry name" value="Thiolase-like"/>
    <property type="match status" value="2"/>
</dbReference>
<dbReference type="PROSITE" id="PS00098">
    <property type="entry name" value="THIOLASE_1"/>
    <property type="match status" value="1"/>
</dbReference>
<dbReference type="PROSITE" id="PS00737">
    <property type="entry name" value="THIOLASE_2"/>
    <property type="match status" value="1"/>
</dbReference>
<dbReference type="PROSITE" id="PS00099">
    <property type="entry name" value="THIOLASE_3"/>
    <property type="match status" value="1"/>
</dbReference>
<organism>
    <name type="scientific">Pseudoalteromonas translucida (strain TAC 125)</name>
    <dbReference type="NCBI Taxonomy" id="326442"/>
    <lineage>
        <taxon>Bacteria</taxon>
        <taxon>Pseudomonadati</taxon>
        <taxon>Pseudomonadota</taxon>
        <taxon>Gammaproteobacteria</taxon>
        <taxon>Alteromonadales</taxon>
        <taxon>Pseudoalteromonadaceae</taxon>
        <taxon>Pseudoalteromonas</taxon>
    </lineage>
</organism>